<feature type="chain" id="PRO_0000094030" description="Stomatin-like protein 1">
    <location>
        <begin position="1"/>
        <end position="399"/>
    </location>
</feature>
<feature type="transmembrane region" description="Helical; Signal-anchor for type III membrane protein" evidence="2">
    <location>
        <begin position="58"/>
        <end position="78"/>
    </location>
</feature>
<feature type="topological domain" description="Cytoplasmic" evidence="2">
    <location>
        <begin position="79"/>
        <end position="399"/>
    </location>
</feature>
<feature type="domain" description="SCP2">
    <location>
        <begin position="288"/>
        <end position="399"/>
    </location>
</feature>
<feature type="short sequence motif" description="Tyrosine-type lysosomal sorting signal" evidence="1 2">
    <location>
        <begin position="6"/>
        <end position="10"/>
    </location>
</feature>
<feature type="modified residue" description="Phosphoserine" evidence="1">
    <location>
        <position position="28"/>
    </location>
</feature>
<feature type="sequence conflict" description="In Ref. 1; BAC32502." evidence="4" ref="1">
    <original>D</original>
    <variation>Y</variation>
    <location>
        <position position="135"/>
    </location>
</feature>
<feature type="sequence conflict" description="In Ref. 1; BAC32502." evidence="4" ref="1">
    <original>R</original>
    <variation>H</variation>
    <location>
        <position position="257"/>
    </location>
</feature>
<feature type="sequence conflict" description="In Ref. 1; BAC32502." evidence="4" ref="1">
    <original>A</original>
    <variation>P</variation>
    <location>
        <position position="283"/>
    </location>
</feature>
<organism>
    <name type="scientific">Mus musculus</name>
    <name type="common">Mouse</name>
    <dbReference type="NCBI Taxonomy" id="10090"/>
    <lineage>
        <taxon>Eukaryota</taxon>
        <taxon>Metazoa</taxon>
        <taxon>Chordata</taxon>
        <taxon>Craniata</taxon>
        <taxon>Vertebrata</taxon>
        <taxon>Euteleostomi</taxon>
        <taxon>Mammalia</taxon>
        <taxon>Eutheria</taxon>
        <taxon>Euarchontoglires</taxon>
        <taxon>Glires</taxon>
        <taxon>Rodentia</taxon>
        <taxon>Myomorpha</taxon>
        <taxon>Muroidea</taxon>
        <taxon>Muridae</taxon>
        <taxon>Murinae</taxon>
        <taxon>Mus</taxon>
        <taxon>Mus</taxon>
    </lineage>
</organism>
<evidence type="ECO:0000250" key="1">
    <source>
        <dbReference type="UniProtKB" id="Q9UBI4"/>
    </source>
</evidence>
<evidence type="ECO:0000255" key="2"/>
<evidence type="ECO:0000269" key="3">
    <source>
    </source>
</evidence>
<evidence type="ECO:0000305" key="4"/>
<gene>
    <name type="primary">Stoml1</name>
</gene>
<accession>Q8CI66</accession>
<accession>Q8BLA3</accession>
<sequence>MLGRSGYRALPLGDFDRFQQSSFGFLGSQKGCLSPEPGSVGPGADAPESWPSCLCHGLVSVLGFLLLLLTFPISGWFALKIVPTYERMIVFRLGRIRNPQGPGMVLLLPFIDSFQRVDLRTRAFNVPPCKLASKDGAVLSVGADVQFRIWDPVLSVMAVKDLNTATRMTAHNAMTKALLRRPLQEIQMEKLKIGDQLLLEINDVTRAWGLEVDRVELAVEAVLQPPQDSLTVPSLDSTLQQLALHLLGGSMNSAVGRVPSPGPDTLEMINEVEPPASLAGAGAEPSPKQPVAEGLLTALQPFLSEALVSQVGACYQFNVILPSGTQSIYFLDLTTGQGRVGHGEPDGIPDVVVEMAEADLQALLSKELRPLGAYMSGRLKVKGDLAVVMKLEAVLKALK</sequence>
<reference key="1">
    <citation type="journal article" date="2005" name="Science">
        <title>The transcriptional landscape of the mammalian genome.</title>
        <authorList>
            <person name="Carninci P."/>
            <person name="Kasukawa T."/>
            <person name="Katayama S."/>
            <person name="Gough J."/>
            <person name="Frith M.C."/>
            <person name="Maeda N."/>
            <person name="Oyama R."/>
            <person name="Ravasi T."/>
            <person name="Lenhard B."/>
            <person name="Wells C."/>
            <person name="Kodzius R."/>
            <person name="Shimokawa K."/>
            <person name="Bajic V.B."/>
            <person name="Brenner S.E."/>
            <person name="Batalov S."/>
            <person name="Forrest A.R."/>
            <person name="Zavolan M."/>
            <person name="Davis M.J."/>
            <person name="Wilming L.G."/>
            <person name="Aidinis V."/>
            <person name="Allen J.E."/>
            <person name="Ambesi-Impiombato A."/>
            <person name="Apweiler R."/>
            <person name="Aturaliya R.N."/>
            <person name="Bailey T.L."/>
            <person name="Bansal M."/>
            <person name="Baxter L."/>
            <person name="Beisel K.W."/>
            <person name="Bersano T."/>
            <person name="Bono H."/>
            <person name="Chalk A.M."/>
            <person name="Chiu K.P."/>
            <person name="Choudhary V."/>
            <person name="Christoffels A."/>
            <person name="Clutterbuck D.R."/>
            <person name="Crowe M.L."/>
            <person name="Dalla E."/>
            <person name="Dalrymple B.P."/>
            <person name="de Bono B."/>
            <person name="Della Gatta G."/>
            <person name="di Bernardo D."/>
            <person name="Down T."/>
            <person name="Engstrom P."/>
            <person name="Fagiolini M."/>
            <person name="Faulkner G."/>
            <person name="Fletcher C.F."/>
            <person name="Fukushima T."/>
            <person name="Furuno M."/>
            <person name="Futaki S."/>
            <person name="Gariboldi M."/>
            <person name="Georgii-Hemming P."/>
            <person name="Gingeras T.R."/>
            <person name="Gojobori T."/>
            <person name="Green R.E."/>
            <person name="Gustincich S."/>
            <person name="Harbers M."/>
            <person name="Hayashi Y."/>
            <person name="Hensch T.K."/>
            <person name="Hirokawa N."/>
            <person name="Hill D."/>
            <person name="Huminiecki L."/>
            <person name="Iacono M."/>
            <person name="Ikeo K."/>
            <person name="Iwama A."/>
            <person name="Ishikawa T."/>
            <person name="Jakt M."/>
            <person name="Kanapin A."/>
            <person name="Katoh M."/>
            <person name="Kawasawa Y."/>
            <person name="Kelso J."/>
            <person name="Kitamura H."/>
            <person name="Kitano H."/>
            <person name="Kollias G."/>
            <person name="Krishnan S.P."/>
            <person name="Kruger A."/>
            <person name="Kummerfeld S.K."/>
            <person name="Kurochkin I.V."/>
            <person name="Lareau L.F."/>
            <person name="Lazarevic D."/>
            <person name="Lipovich L."/>
            <person name="Liu J."/>
            <person name="Liuni S."/>
            <person name="McWilliam S."/>
            <person name="Madan Babu M."/>
            <person name="Madera M."/>
            <person name="Marchionni L."/>
            <person name="Matsuda H."/>
            <person name="Matsuzawa S."/>
            <person name="Miki H."/>
            <person name="Mignone F."/>
            <person name="Miyake S."/>
            <person name="Morris K."/>
            <person name="Mottagui-Tabar S."/>
            <person name="Mulder N."/>
            <person name="Nakano N."/>
            <person name="Nakauchi H."/>
            <person name="Ng P."/>
            <person name="Nilsson R."/>
            <person name="Nishiguchi S."/>
            <person name="Nishikawa S."/>
            <person name="Nori F."/>
            <person name="Ohara O."/>
            <person name="Okazaki Y."/>
            <person name="Orlando V."/>
            <person name="Pang K.C."/>
            <person name="Pavan W.J."/>
            <person name="Pavesi G."/>
            <person name="Pesole G."/>
            <person name="Petrovsky N."/>
            <person name="Piazza S."/>
            <person name="Reed J."/>
            <person name="Reid J.F."/>
            <person name="Ring B.Z."/>
            <person name="Ringwald M."/>
            <person name="Rost B."/>
            <person name="Ruan Y."/>
            <person name="Salzberg S.L."/>
            <person name="Sandelin A."/>
            <person name="Schneider C."/>
            <person name="Schoenbach C."/>
            <person name="Sekiguchi K."/>
            <person name="Semple C.A."/>
            <person name="Seno S."/>
            <person name="Sessa L."/>
            <person name="Sheng Y."/>
            <person name="Shibata Y."/>
            <person name="Shimada H."/>
            <person name="Shimada K."/>
            <person name="Silva D."/>
            <person name="Sinclair B."/>
            <person name="Sperling S."/>
            <person name="Stupka E."/>
            <person name="Sugiura K."/>
            <person name="Sultana R."/>
            <person name="Takenaka Y."/>
            <person name="Taki K."/>
            <person name="Tammoja K."/>
            <person name="Tan S.L."/>
            <person name="Tang S."/>
            <person name="Taylor M.S."/>
            <person name="Tegner J."/>
            <person name="Teichmann S.A."/>
            <person name="Ueda H.R."/>
            <person name="van Nimwegen E."/>
            <person name="Verardo R."/>
            <person name="Wei C.L."/>
            <person name="Yagi K."/>
            <person name="Yamanishi H."/>
            <person name="Zabarovsky E."/>
            <person name="Zhu S."/>
            <person name="Zimmer A."/>
            <person name="Hide W."/>
            <person name="Bult C."/>
            <person name="Grimmond S.M."/>
            <person name="Teasdale R.D."/>
            <person name="Liu E.T."/>
            <person name="Brusic V."/>
            <person name="Quackenbush J."/>
            <person name="Wahlestedt C."/>
            <person name="Mattick J.S."/>
            <person name="Hume D.A."/>
            <person name="Kai C."/>
            <person name="Sasaki D."/>
            <person name="Tomaru Y."/>
            <person name="Fukuda S."/>
            <person name="Kanamori-Katayama M."/>
            <person name="Suzuki M."/>
            <person name="Aoki J."/>
            <person name="Arakawa T."/>
            <person name="Iida J."/>
            <person name="Imamura K."/>
            <person name="Itoh M."/>
            <person name="Kato T."/>
            <person name="Kawaji H."/>
            <person name="Kawagashira N."/>
            <person name="Kawashima T."/>
            <person name="Kojima M."/>
            <person name="Kondo S."/>
            <person name="Konno H."/>
            <person name="Nakano K."/>
            <person name="Ninomiya N."/>
            <person name="Nishio T."/>
            <person name="Okada M."/>
            <person name="Plessy C."/>
            <person name="Shibata K."/>
            <person name="Shiraki T."/>
            <person name="Suzuki S."/>
            <person name="Tagami M."/>
            <person name="Waki K."/>
            <person name="Watahiki A."/>
            <person name="Okamura-Oho Y."/>
            <person name="Suzuki H."/>
            <person name="Kawai J."/>
            <person name="Hayashizaki Y."/>
        </authorList>
    </citation>
    <scope>NUCLEOTIDE SEQUENCE [LARGE SCALE MRNA]</scope>
    <source>
        <strain>C57BL/6J</strain>
        <tissue>Corpora quadrigemina</tissue>
    </source>
</reference>
<reference key="2">
    <citation type="journal article" date="2004" name="Genome Res.">
        <title>The status, quality, and expansion of the NIH full-length cDNA project: the Mammalian Gene Collection (MGC).</title>
        <authorList>
            <consortium name="The MGC Project Team"/>
        </authorList>
    </citation>
    <scope>NUCLEOTIDE SEQUENCE [LARGE SCALE MRNA]</scope>
    <source>
        <strain>Czech II</strain>
        <tissue>Mammary tumor</tissue>
    </source>
</reference>
<reference key="3">
    <citation type="journal article" date="2014" name="J. Physiol. (Lond.)">
        <title>Subunit-specific inhibition of acid sensing ion channels by stomatin-like protein 1.</title>
        <authorList>
            <person name="Kozlenkov A."/>
            <person name="Lapatsina L."/>
            <person name="Lewin G.R."/>
            <person name="Smith E.S."/>
        </authorList>
    </citation>
    <scope>SUBCELLULAR LOCATION</scope>
    <scope>FUNCTION</scope>
    <scope>TISSUE SPECIFICITY</scope>
</reference>
<proteinExistence type="evidence at transcript level"/>
<name>STML1_MOUSE</name>
<dbReference type="EMBL" id="AK045820">
    <property type="protein sequence ID" value="BAC32502.1"/>
    <property type="molecule type" value="mRNA"/>
</dbReference>
<dbReference type="EMBL" id="BC037074">
    <property type="protein sequence ID" value="AAH37074.1"/>
    <property type="molecule type" value="mRNA"/>
</dbReference>
<dbReference type="CCDS" id="CCDS23241.1"/>
<dbReference type="RefSeq" id="NP_081218.3">
    <property type="nucleotide sequence ID" value="NM_026942.3"/>
</dbReference>
<dbReference type="SMR" id="Q8CI66"/>
<dbReference type="BioGRID" id="213233">
    <property type="interactions" value="2"/>
</dbReference>
<dbReference type="FunCoup" id="Q8CI66">
    <property type="interactions" value="312"/>
</dbReference>
<dbReference type="STRING" id="10090.ENSMUSP00000034883"/>
<dbReference type="PhosphoSitePlus" id="Q8CI66"/>
<dbReference type="SwissPalm" id="Q8CI66"/>
<dbReference type="PaxDb" id="10090-ENSMUSP00000034883"/>
<dbReference type="ProteomicsDB" id="257495"/>
<dbReference type="DNASU" id="69106"/>
<dbReference type="GeneID" id="69106"/>
<dbReference type="KEGG" id="mmu:69106"/>
<dbReference type="UCSC" id="uc009pws.2">
    <property type="organism name" value="mouse"/>
</dbReference>
<dbReference type="AGR" id="MGI:1916356"/>
<dbReference type="CTD" id="9399"/>
<dbReference type="MGI" id="MGI:1916356">
    <property type="gene designation" value="Stoml1"/>
</dbReference>
<dbReference type="eggNOG" id="KOG2621">
    <property type="taxonomic scope" value="Eukaryota"/>
</dbReference>
<dbReference type="eggNOG" id="KOG4170">
    <property type="taxonomic scope" value="Eukaryota"/>
</dbReference>
<dbReference type="InParanoid" id="Q8CI66"/>
<dbReference type="OrthoDB" id="3592703at2759"/>
<dbReference type="PhylomeDB" id="Q8CI66"/>
<dbReference type="BioGRID-ORCS" id="69106">
    <property type="hits" value="2 hits in 76 CRISPR screens"/>
</dbReference>
<dbReference type="PRO" id="PR:Q8CI66"/>
<dbReference type="Proteomes" id="UP000000589">
    <property type="component" value="Unplaced"/>
</dbReference>
<dbReference type="RNAct" id="Q8CI66">
    <property type="molecule type" value="protein"/>
</dbReference>
<dbReference type="GO" id="GO:0031410">
    <property type="term" value="C:cytoplasmic vesicle"/>
    <property type="evidence" value="ECO:0000314"/>
    <property type="project" value="MGI"/>
</dbReference>
<dbReference type="GO" id="GO:0031902">
    <property type="term" value="C:late endosome membrane"/>
    <property type="evidence" value="ECO:0007669"/>
    <property type="project" value="UniProtKB-SubCell"/>
</dbReference>
<dbReference type="GO" id="GO:0045121">
    <property type="term" value="C:membrane raft"/>
    <property type="evidence" value="ECO:0007669"/>
    <property type="project" value="UniProtKB-SubCell"/>
</dbReference>
<dbReference type="GO" id="GO:0005886">
    <property type="term" value="C:plasma membrane"/>
    <property type="evidence" value="ECO:0000314"/>
    <property type="project" value="MGI"/>
</dbReference>
<dbReference type="GO" id="GO:0008200">
    <property type="term" value="F:ion channel inhibitor activity"/>
    <property type="evidence" value="ECO:0000314"/>
    <property type="project" value="MGI"/>
</dbReference>
<dbReference type="GO" id="GO:1990830">
    <property type="term" value="P:cellular response to leukemia inhibitory factor"/>
    <property type="evidence" value="ECO:0000270"/>
    <property type="project" value="MGI"/>
</dbReference>
<dbReference type="GO" id="GO:0006869">
    <property type="term" value="P:lipid transport"/>
    <property type="evidence" value="ECO:0007669"/>
    <property type="project" value="UniProtKB-KW"/>
</dbReference>
<dbReference type="CDD" id="cd13436">
    <property type="entry name" value="SPFH_SLP-1"/>
    <property type="match status" value="1"/>
</dbReference>
<dbReference type="FunFam" id="3.30.479.30:FF:000011">
    <property type="entry name" value="stomatin-like protein 1 isoform X1"/>
    <property type="match status" value="1"/>
</dbReference>
<dbReference type="FunFam" id="3.30.1050.10:FF:000003">
    <property type="entry name" value="stomatin-like protein 1 isoform X2"/>
    <property type="match status" value="1"/>
</dbReference>
<dbReference type="Gene3D" id="3.30.479.30">
    <property type="entry name" value="Band 7 domain"/>
    <property type="match status" value="1"/>
</dbReference>
<dbReference type="Gene3D" id="3.30.1050.10">
    <property type="entry name" value="SCP2 sterol-binding domain"/>
    <property type="match status" value="1"/>
</dbReference>
<dbReference type="InterPro" id="IPR043202">
    <property type="entry name" value="Band-7_stomatin-like"/>
</dbReference>
<dbReference type="InterPro" id="IPR001107">
    <property type="entry name" value="Band_7"/>
</dbReference>
<dbReference type="InterPro" id="IPR036013">
    <property type="entry name" value="Band_7/SPFH_dom_sf"/>
</dbReference>
<dbReference type="InterPro" id="IPR003033">
    <property type="entry name" value="SCP2_sterol-bd_dom"/>
</dbReference>
<dbReference type="InterPro" id="IPR036527">
    <property type="entry name" value="SCP2_sterol-bd_dom_sf"/>
</dbReference>
<dbReference type="InterPro" id="IPR001972">
    <property type="entry name" value="Stomatin_HflK_fam"/>
</dbReference>
<dbReference type="PANTHER" id="PTHR10264">
    <property type="entry name" value="BAND 7 PROTEIN-RELATED"/>
    <property type="match status" value="1"/>
</dbReference>
<dbReference type="PANTHER" id="PTHR10264:SF130">
    <property type="entry name" value="STOMATIN-LIKE PROTEIN 1"/>
    <property type="match status" value="1"/>
</dbReference>
<dbReference type="Pfam" id="PF01145">
    <property type="entry name" value="Band_7"/>
    <property type="match status" value="1"/>
</dbReference>
<dbReference type="Pfam" id="PF02036">
    <property type="entry name" value="SCP2"/>
    <property type="match status" value="1"/>
</dbReference>
<dbReference type="PRINTS" id="PR00721">
    <property type="entry name" value="STOMATIN"/>
</dbReference>
<dbReference type="SMART" id="SM00244">
    <property type="entry name" value="PHB"/>
    <property type="match status" value="1"/>
</dbReference>
<dbReference type="SUPFAM" id="SSF117892">
    <property type="entry name" value="Band 7/SPFH domain"/>
    <property type="match status" value="1"/>
</dbReference>
<dbReference type="SUPFAM" id="SSF55718">
    <property type="entry name" value="SCP-like"/>
    <property type="match status" value="1"/>
</dbReference>
<keyword id="KW-1003">Cell membrane</keyword>
<keyword id="KW-0968">Cytoplasmic vesicle</keyword>
<keyword id="KW-0967">Endosome</keyword>
<keyword id="KW-0445">Lipid transport</keyword>
<keyword id="KW-0472">Membrane</keyword>
<keyword id="KW-0597">Phosphoprotein</keyword>
<keyword id="KW-1185">Reference proteome</keyword>
<keyword id="KW-0735">Signal-anchor</keyword>
<keyword id="KW-0812">Transmembrane</keyword>
<keyword id="KW-1133">Transmembrane helix</keyword>
<keyword id="KW-0813">Transport</keyword>
<comment type="function">
    <text evidence="1 3">May play a role in cholesterol transfer to late endosomes (By similarity). May play a role in modulating membrane acid-sensing ion channels. Can specifically inhibit proton-gated current of ASIC1 isoform 1. Can increase inactivation speed of ASIC3. May be involved in regulation of proton sensing in dorsal root ganglions (PubMed:24247984).</text>
</comment>
<comment type="subunit">
    <text evidence="1">Interacts with STOM; may redistribute STOM from the plasma membrane to late endosomes.</text>
</comment>
<comment type="subcellular location">
    <subcellularLocation>
        <location evidence="4">Membrane</location>
        <topology evidence="4">Single-pass type III membrane protein</topology>
    </subcellularLocation>
    <subcellularLocation>
        <location evidence="3">Cytoplasmic vesicle</location>
    </subcellularLocation>
    <subcellularLocation>
        <location evidence="3">Cell membrane</location>
        <topology evidence="4">Single-pass type III membrane protein</topology>
    </subcellularLocation>
    <subcellularLocation>
        <location evidence="1">Late endosome membrane</location>
    </subcellularLocation>
    <subcellularLocation>
        <location evidence="1">Membrane raft</location>
    </subcellularLocation>
</comment>
<comment type="tissue specificity">
    <text evidence="3">Expressed in dorsal root ganglion neurons.</text>
</comment>
<comment type="similarity">
    <text evidence="4">Belongs to the band 7/mec-2 family.</text>
</comment>
<protein>
    <recommendedName>
        <fullName>Stomatin-like protein 1</fullName>
        <shortName>SLP-1</shortName>
    </recommendedName>
</protein>